<protein>
    <recommendedName>
        <fullName evidence="1">Multidrug resistance protein MdtA</fullName>
    </recommendedName>
    <alternativeName>
        <fullName evidence="1">Multidrug transporter MdtA</fullName>
    </alternativeName>
</protein>
<gene>
    <name evidence="1" type="primary">mdtA</name>
    <name type="ordered locus">ECS88_2173</name>
</gene>
<feature type="signal peptide" evidence="1">
    <location>
        <begin position="1"/>
        <end position="21"/>
    </location>
</feature>
<feature type="chain" id="PRO_1000145634" description="Multidrug resistance protein MdtA">
    <location>
        <begin position="22"/>
        <end position="415"/>
    </location>
</feature>
<feature type="region of interest" description="Disordered" evidence="2">
    <location>
        <begin position="31"/>
        <end position="56"/>
    </location>
</feature>
<feature type="region of interest" description="Disordered" evidence="2">
    <location>
        <begin position="391"/>
        <end position="415"/>
    </location>
</feature>
<feature type="compositionally biased region" description="Polar residues" evidence="2">
    <location>
        <begin position="31"/>
        <end position="46"/>
    </location>
</feature>
<feature type="compositionally biased region" description="Basic and acidic residues" evidence="2">
    <location>
        <begin position="399"/>
        <end position="415"/>
    </location>
</feature>
<comment type="function">
    <text evidence="1">The MdtABC tripartite complex confers resistance against novobiocin and deoxycholate.</text>
</comment>
<comment type="subunit">
    <text evidence="1">Part of a tripartite efflux system composed of MdtA, MdtB and MdtC.</text>
</comment>
<comment type="subcellular location">
    <subcellularLocation>
        <location evidence="1">Cell inner membrane</location>
        <topology evidence="1">Peripheral membrane protein</topology>
    </subcellularLocation>
</comment>
<comment type="induction">
    <text evidence="1">The mdtABC operon is transcriptionally activated by BaeR.</text>
</comment>
<comment type="similarity">
    <text evidence="1">Belongs to the membrane fusion protein (MFP) (TC 8.A.1) family.</text>
</comment>
<sequence>MKGSYKSRWVIVIVVVIAAIAAFWFWQGRNDSQSAAPGATKQAQQSPAGGRRGMRAGPLAPVQAATAVEQAVPRYLTGLGTITAANTVTVRSRVDGQLMALHFQEGQQVKAGDLLAEIDPSQFKVALAQAQGQLAKDKATLANARRDLSRYQQLAKTNLVSRQELDAQQALVSETEGTIKADEASVASAQLQLDWSRITAPVDGRVGLKQVDVGNQISSGDTTGIVVITQTHPIDLVFTLPESDIATVVQAQKAGKPLVVEAWDRTNSKKLSEGTLLSLDNQIDATTGTIKVKARFNNQDDALFPNQFVNARMLVDTEQNAVVIPTAALQMGNEGHFVWVLNSENKVSKHLVTPGIQDSQKVVIRAGISAGDRVVTDGIDRLTEGAKVEVVEAQSTTTPEEKATSREYAKKGARS</sequence>
<proteinExistence type="inferred from homology"/>
<dbReference type="EMBL" id="CU928161">
    <property type="protein sequence ID" value="CAR03459.1"/>
    <property type="molecule type" value="Genomic_DNA"/>
</dbReference>
<dbReference type="RefSeq" id="WP_000678945.1">
    <property type="nucleotide sequence ID" value="NC_011742.1"/>
</dbReference>
<dbReference type="SMR" id="B7ME86"/>
<dbReference type="KEGG" id="ecz:ECS88_2173"/>
<dbReference type="HOGENOM" id="CLU_018816_2_0_6"/>
<dbReference type="Proteomes" id="UP000000747">
    <property type="component" value="Chromosome"/>
</dbReference>
<dbReference type="GO" id="GO:1990281">
    <property type="term" value="C:efflux pump complex"/>
    <property type="evidence" value="ECO:0007669"/>
    <property type="project" value="TreeGrafter"/>
</dbReference>
<dbReference type="GO" id="GO:0005886">
    <property type="term" value="C:plasma membrane"/>
    <property type="evidence" value="ECO:0007669"/>
    <property type="project" value="UniProtKB-SubCell"/>
</dbReference>
<dbReference type="GO" id="GO:0015562">
    <property type="term" value="F:efflux transmembrane transporter activity"/>
    <property type="evidence" value="ECO:0007669"/>
    <property type="project" value="TreeGrafter"/>
</dbReference>
<dbReference type="FunFam" id="2.40.420.20:FF:000001">
    <property type="entry name" value="Efflux RND transporter periplasmic adaptor subunit"/>
    <property type="match status" value="1"/>
</dbReference>
<dbReference type="FunFam" id="1.10.287.470:FF:000005">
    <property type="entry name" value="Multidrug resistance protein MdtA"/>
    <property type="match status" value="1"/>
</dbReference>
<dbReference type="FunFam" id="2.40.30.170:FF:000006">
    <property type="entry name" value="Multidrug resistance protein MdtA"/>
    <property type="match status" value="1"/>
</dbReference>
<dbReference type="Gene3D" id="2.40.30.170">
    <property type="match status" value="1"/>
</dbReference>
<dbReference type="Gene3D" id="2.40.420.20">
    <property type="match status" value="1"/>
</dbReference>
<dbReference type="Gene3D" id="2.40.50.100">
    <property type="match status" value="1"/>
</dbReference>
<dbReference type="Gene3D" id="1.10.287.470">
    <property type="entry name" value="Helix hairpin bin"/>
    <property type="match status" value="1"/>
</dbReference>
<dbReference type="HAMAP" id="MF_01422">
    <property type="entry name" value="MdtA"/>
    <property type="match status" value="1"/>
</dbReference>
<dbReference type="InterPro" id="IPR032317">
    <property type="entry name" value="CusB_D23"/>
</dbReference>
<dbReference type="InterPro" id="IPR022824">
    <property type="entry name" value="Multidrug-R_MdtA"/>
</dbReference>
<dbReference type="InterPro" id="IPR006143">
    <property type="entry name" value="RND_pump_MFP"/>
</dbReference>
<dbReference type="NCBIfam" id="NF008589">
    <property type="entry name" value="PRK11556.1"/>
    <property type="match status" value="1"/>
</dbReference>
<dbReference type="NCBIfam" id="TIGR01730">
    <property type="entry name" value="RND_mfp"/>
    <property type="match status" value="1"/>
</dbReference>
<dbReference type="PANTHER" id="PTHR30469">
    <property type="entry name" value="MULTIDRUG RESISTANCE PROTEIN MDTA"/>
    <property type="match status" value="1"/>
</dbReference>
<dbReference type="PANTHER" id="PTHR30469:SF12">
    <property type="entry name" value="MULTIDRUG RESISTANCE PROTEIN MDTA"/>
    <property type="match status" value="1"/>
</dbReference>
<dbReference type="Pfam" id="PF16576">
    <property type="entry name" value="HlyD_D23"/>
    <property type="match status" value="1"/>
</dbReference>
<dbReference type="SUPFAM" id="SSF111369">
    <property type="entry name" value="HlyD-like secretion proteins"/>
    <property type="match status" value="1"/>
</dbReference>
<accession>B7ME86</accession>
<reference key="1">
    <citation type="journal article" date="2009" name="PLoS Genet.">
        <title>Organised genome dynamics in the Escherichia coli species results in highly diverse adaptive paths.</title>
        <authorList>
            <person name="Touchon M."/>
            <person name="Hoede C."/>
            <person name="Tenaillon O."/>
            <person name="Barbe V."/>
            <person name="Baeriswyl S."/>
            <person name="Bidet P."/>
            <person name="Bingen E."/>
            <person name="Bonacorsi S."/>
            <person name="Bouchier C."/>
            <person name="Bouvet O."/>
            <person name="Calteau A."/>
            <person name="Chiapello H."/>
            <person name="Clermont O."/>
            <person name="Cruveiller S."/>
            <person name="Danchin A."/>
            <person name="Diard M."/>
            <person name="Dossat C."/>
            <person name="Karoui M.E."/>
            <person name="Frapy E."/>
            <person name="Garry L."/>
            <person name="Ghigo J.M."/>
            <person name="Gilles A.M."/>
            <person name="Johnson J."/>
            <person name="Le Bouguenec C."/>
            <person name="Lescat M."/>
            <person name="Mangenot S."/>
            <person name="Martinez-Jehanne V."/>
            <person name="Matic I."/>
            <person name="Nassif X."/>
            <person name="Oztas S."/>
            <person name="Petit M.A."/>
            <person name="Pichon C."/>
            <person name="Rouy Z."/>
            <person name="Ruf C.S."/>
            <person name="Schneider D."/>
            <person name="Tourret J."/>
            <person name="Vacherie B."/>
            <person name="Vallenet D."/>
            <person name="Medigue C."/>
            <person name="Rocha E.P.C."/>
            <person name="Denamur E."/>
        </authorList>
    </citation>
    <scope>NUCLEOTIDE SEQUENCE [LARGE SCALE GENOMIC DNA]</scope>
    <source>
        <strain>S88 / ExPEC</strain>
    </source>
</reference>
<keyword id="KW-0997">Cell inner membrane</keyword>
<keyword id="KW-1003">Cell membrane</keyword>
<keyword id="KW-0472">Membrane</keyword>
<keyword id="KW-1185">Reference proteome</keyword>
<keyword id="KW-0732">Signal</keyword>
<keyword id="KW-0813">Transport</keyword>
<name>MDTA_ECO45</name>
<organism>
    <name type="scientific">Escherichia coli O45:K1 (strain S88 / ExPEC)</name>
    <dbReference type="NCBI Taxonomy" id="585035"/>
    <lineage>
        <taxon>Bacteria</taxon>
        <taxon>Pseudomonadati</taxon>
        <taxon>Pseudomonadota</taxon>
        <taxon>Gammaproteobacteria</taxon>
        <taxon>Enterobacterales</taxon>
        <taxon>Enterobacteriaceae</taxon>
        <taxon>Escherichia</taxon>
    </lineage>
</organism>
<evidence type="ECO:0000255" key="1">
    <source>
        <dbReference type="HAMAP-Rule" id="MF_01422"/>
    </source>
</evidence>
<evidence type="ECO:0000256" key="2">
    <source>
        <dbReference type="SAM" id="MobiDB-lite"/>
    </source>
</evidence>